<comment type="function">
    <text evidence="1">Binds together with bS18 to 16S ribosomal RNA.</text>
</comment>
<comment type="similarity">
    <text evidence="1">Belongs to the bacterial ribosomal protein bS6 family.</text>
</comment>
<comment type="sequence caution" evidence="2">
    <conflict type="erroneous initiation">
        <sequence resource="EMBL-CDS" id="AAL93772"/>
    </conflict>
</comment>
<feature type="chain" id="PRO_0000176769" description="Small ribosomal subunit protein bS6">
    <location>
        <begin position="1"/>
        <end position="94"/>
    </location>
</feature>
<evidence type="ECO:0000255" key="1">
    <source>
        <dbReference type="HAMAP-Rule" id="MF_00360"/>
    </source>
</evidence>
<evidence type="ECO:0000305" key="2"/>
<reference key="1">
    <citation type="journal article" date="2002" name="J. Bacteriol.">
        <title>Genome sequence and analysis of the oral bacterium Fusobacterium nucleatum strain ATCC 25586.</title>
        <authorList>
            <person name="Kapatral V."/>
            <person name="Anderson I."/>
            <person name="Ivanova N."/>
            <person name="Reznik G."/>
            <person name="Los T."/>
            <person name="Lykidis A."/>
            <person name="Bhattacharyya A."/>
            <person name="Bartman A."/>
            <person name="Gardner W."/>
            <person name="Grechkin G."/>
            <person name="Zhu L."/>
            <person name="Vasieva O."/>
            <person name="Chu L."/>
            <person name="Kogan Y."/>
            <person name="Chaga O."/>
            <person name="Goltsman E."/>
            <person name="Bernal A."/>
            <person name="Larsen N."/>
            <person name="D'Souza M."/>
            <person name="Walunas T."/>
            <person name="Pusch G."/>
            <person name="Haselkorn R."/>
            <person name="Fonstein M."/>
            <person name="Kyrpides N.C."/>
            <person name="Overbeek R."/>
        </authorList>
    </citation>
    <scope>NUCLEOTIDE SEQUENCE [LARGE SCALE GENOMIC DNA]</scope>
    <source>
        <strain>ATCC 25586 / DSM 15643 / BCRC 10681 / CIP 101130 / JCM 8532 / KCTC 2640 / LMG 13131 / VPI 4355</strain>
    </source>
</reference>
<organism>
    <name type="scientific">Fusobacterium nucleatum subsp. nucleatum (strain ATCC 25586 / DSM 15643 / BCRC 10681 / CIP 101130 / JCM 8532 / KCTC 2640 / LMG 13131 / VPI 4355)</name>
    <dbReference type="NCBI Taxonomy" id="190304"/>
    <lineage>
        <taxon>Bacteria</taxon>
        <taxon>Fusobacteriati</taxon>
        <taxon>Fusobacteriota</taxon>
        <taxon>Fusobacteriia</taxon>
        <taxon>Fusobacteriales</taxon>
        <taxon>Fusobacteriaceae</taxon>
        <taxon>Fusobacterium</taxon>
    </lineage>
</organism>
<dbReference type="EMBL" id="AE009951">
    <property type="protein sequence ID" value="AAL93772.1"/>
    <property type="status" value="ALT_INIT"/>
    <property type="molecule type" value="Genomic_DNA"/>
</dbReference>
<dbReference type="RefSeq" id="NP_602473.1">
    <property type="nucleotide sequence ID" value="NC_003454.1"/>
</dbReference>
<dbReference type="RefSeq" id="WP_023040534.1">
    <property type="nucleotide sequence ID" value="NZ_OZ209243.1"/>
</dbReference>
<dbReference type="SMR" id="Q8RIE3"/>
<dbReference type="FunCoup" id="Q8RIE3">
    <property type="interactions" value="314"/>
</dbReference>
<dbReference type="STRING" id="190304.FN1657"/>
<dbReference type="PaxDb" id="190304-FN1657"/>
<dbReference type="EnsemblBacteria" id="AAL93772">
    <property type="protein sequence ID" value="AAL93772"/>
    <property type="gene ID" value="FN1657"/>
</dbReference>
<dbReference type="GeneID" id="79782595"/>
<dbReference type="KEGG" id="fnu:FN1657"/>
<dbReference type="PATRIC" id="fig|190304.8.peg.150"/>
<dbReference type="eggNOG" id="COG0360">
    <property type="taxonomic scope" value="Bacteria"/>
</dbReference>
<dbReference type="HOGENOM" id="CLU_113441_5_3_0"/>
<dbReference type="InParanoid" id="Q8RIE3"/>
<dbReference type="Proteomes" id="UP000002521">
    <property type="component" value="Chromosome"/>
</dbReference>
<dbReference type="GO" id="GO:0005737">
    <property type="term" value="C:cytoplasm"/>
    <property type="evidence" value="ECO:0007669"/>
    <property type="project" value="UniProtKB-ARBA"/>
</dbReference>
<dbReference type="GO" id="GO:1990904">
    <property type="term" value="C:ribonucleoprotein complex"/>
    <property type="evidence" value="ECO:0007669"/>
    <property type="project" value="UniProtKB-KW"/>
</dbReference>
<dbReference type="GO" id="GO:0005840">
    <property type="term" value="C:ribosome"/>
    <property type="evidence" value="ECO:0007669"/>
    <property type="project" value="UniProtKB-KW"/>
</dbReference>
<dbReference type="GO" id="GO:0070181">
    <property type="term" value="F:small ribosomal subunit rRNA binding"/>
    <property type="evidence" value="ECO:0000318"/>
    <property type="project" value="GO_Central"/>
</dbReference>
<dbReference type="GO" id="GO:0003735">
    <property type="term" value="F:structural constituent of ribosome"/>
    <property type="evidence" value="ECO:0000318"/>
    <property type="project" value="GO_Central"/>
</dbReference>
<dbReference type="GO" id="GO:0006412">
    <property type="term" value="P:translation"/>
    <property type="evidence" value="ECO:0007669"/>
    <property type="project" value="UniProtKB-UniRule"/>
</dbReference>
<dbReference type="CDD" id="cd00473">
    <property type="entry name" value="bS6"/>
    <property type="match status" value="1"/>
</dbReference>
<dbReference type="FunFam" id="3.30.70.60:FF:000002">
    <property type="entry name" value="30S ribosomal protein S6"/>
    <property type="match status" value="1"/>
</dbReference>
<dbReference type="Gene3D" id="3.30.70.60">
    <property type="match status" value="1"/>
</dbReference>
<dbReference type="HAMAP" id="MF_00360">
    <property type="entry name" value="Ribosomal_bS6"/>
    <property type="match status" value="1"/>
</dbReference>
<dbReference type="InterPro" id="IPR000529">
    <property type="entry name" value="Ribosomal_bS6"/>
</dbReference>
<dbReference type="InterPro" id="IPR035980">
    <property type="entry name" value="Ribosomal_bS6_sf"/>
</dbReference>
<dbReference type="InterPro" id="IPR020814">
    <property type="entry name" value="Ribosomal_S6_plastid/chlpt"/>
</dbReference>
<dbReference type="InterPro" id="IPR014717">
    <property type="entry name" value="Transl_elong_EF1B/ribsomal_bS6"/>
</dbReference>
<dbReference type="NCBIfam" id="TIGR00166">
    <property type="entry name" value="S6"/>
    <property type="match status" value="1"/>
</dbReference>
<dbReference type="PANTHER" id="PTHR21011">
    <property type="entry name" value="MITOCHONDRIAL 28S RIBOSOMAL PROTEIN S6"/>
    <property type="match status" value="1"/>
</dbReference>
<dbReference type="PANTHER" id="PTHR21011:SF1">
    <property type="entry name" value="SMALL RIBOSOMAL SUBUNIT PROTEIN BS6M"/>
    <property type="match status" value="1"/>
</dbReference>
<dbReference type="Pfam" id="PF01250">
    <property type="entry name" value="Ribosomal_S6"/>
    <property type="match status" value="1"/>
</dbReference>
<dbReference type="SUPFAM" id="SSF54995">
    <property type="entry name" value="Ribosomal protein S6"/>
    <property type="match status" value="1"/>
</dbReference>
<gene>
    <name evidence="1" type="primary">rpsF</name>
    <name type="ordered locus">FN1657</name>
</gene>
<protein>
    <recommendedName>
        <fullName evidence="1">Small ribosomal subunit protein bS6</fullName>
    </recommendedName>
    <alternativeName>
        <fullName evidence="2">30S ribosomal protein S6</fullName>
    </alternativeName>
</protein>
<accession>Q8RIE3</accession>
<keyword id="KW-1185">Reference proteome</keyword>
<keyword id="KW-0687">Ribonucleoprotein</keyword>
<keyword id="KW-0689">Ribosomal protein</keyword>
<keyword id="KW-0694">RNA-binding</keyword>
<keyword id="KW-0699">rRNA-binding</keyword>
<sequence>MRKYEIMYIINPTVLEEGREELVNQVNALLTSNGATIAKTEKWGERKLAYPIDKKKSGFYVLTTFEIDGTKLAEVESKLNIMESVMRYIVVKQD</sequence>
<proteinExistence type="inferred from homology"/>
<name>RS6_FUSNN</name>